<comment type="function">
    <text evidence="1 10">Associates with the cytoplasmic domain of a variety of cadherins. The association of catenins to cadherins produces a complex which is linked to the actin filament network, and which seems to be of primary importance for cadherins cell-adhesion properties. Can associate with both E- and N-cadherins. Originally believed to be a stable component of E-cadherin/catenin adhesion complexes and to mediate the linkage of cadherins to the actin cytoskeleton at adherens junctions. In contrast, cortical actin was found to be much more dynamic than E-cadherin/catenin complexes and CTNNA1 was shown not to bind to F-actin when assembled in the complex suggesting a different linkage between actin and adherens junctions components. The homodimeric form may regulate actin filament assembly and inhibit actin branching by competing with the Arp2/3 complex for binding to actin filaments. Involved in the regulation of WWTR1/TAZ, YAP1 and TGFB1-dependent SMAD2 and SMAD3 nuclear accumulation (By similarity). May play a crucial role in cell differentiation.</text>
</comment>
<comment type="subunit">
    <text evidence="1 4 6 7 12 13">Monomer and homodimer; the monomer preferentially binds to CTNNB1 and the homodimer to actin (By similarity). Component of an cadherin:catenin adhesion complex composed of at least of CDH26, beta-catenin/CTNNB1, alpha-catenin/CTNNA1 and p120 catenin/CTNND1 (PubMed:28051089). Possible component of an E-cadherin/ catenin adhesion complex together with E-cadherin/CDH1 and beta-catenin/CTNNB1 or gamma-catenin/JUP; the complex is located to adherens junctions (By similarity). The stable association of CTNNA1 is controversial as CTNNA1 was shown not to bind to F-actin when assembled in the complex (By similarity). Alternatively, the CTNNA1-containing complex may be linked to F-actin by other proteins such as LIMA1 (By similarity). Binds AFDN and F-actin (By similarity). Interacts with ARHGAP21 (PubMed:16184169). Interacts with AJUBA (PubMed:12417594). Interacts with LIMA1 (PubMed:18093941). Interacts with vinculin/VCL (PubMed:26691986). Interacts with TJP2/ZO2 (via N-terminus) (By similarity). Interacts with TJP1/ZO1 (via N-terminus) (By similarity).</text>
</comment>
<comment type="interaction">
    <interactant intactId="EBI-701918">
        <id>P35221</id>
    </interactant>
    <interactant intactId="EBI-727707">
        <id>P25054</id>
        <label>APC</label>
    </interactant>
    <organismsDiffer>false</organismsDiffer>
    <experiments>3</experiments>
</comment>
<comment type="interaction">
    <interactant intactId="EBI-701918">
        <id>P35221</id>
    </interactant>
    <interactant intactId="EBI-727477">
        <id>P12830</id>
        <label>CDH1</label>
    </interactant>
    <organismsDiffer>false</organismsDiffer>
    <experiments>8</experiments>
</comment>
<comment type="interaction">
    <interactant intactId="EBI-701918">
        <id>P35221</id>
    </interactant>
    <interactant intactId="EBI-947346">
        <id>Q5VT06</id>
        <label>CEP350</label>
    </interactant>
    <organismsDiffer>false</organismsDiffer>
    <experiments>5</experiments>
</comment>
<comment type="interaction">
    <interactant intactId="EBI-701918">
        <id>P35221</id>
    </interactant>
    <interactant intactId="EBI-701918">
        <id>P35221</id>
        <label>CTNNA1</label>
    </interactant>
    <organismsDiffer>false</organismsDiffer>
    <experiments>3</experiments>
</comment>
<comment type="interaction">
    <interactant intactId="EBI-701918">
        <id>P35221</id>
    </interactant>
    <interactant intactId="EBI-491549">
        <id>P35222</id>
        <label>CTNNB1</label>
    </interactant>
    <organismsDiffer>false</organismsDiffer>
    <experiments>7</experiments>
</comment>
<comment type="interaction">
    <interactant intactId="EBI-701918">
        <id>P35221</id>
    </interactant>
    <interactant intactId="EBI-1054039">
        <id>Q9H8V3</id>
        <label>ECT2</label>
    </interactant>
    <organismsDiffer>false</organismsDiffer>
    <experiments>3</experiments>
</comment>
<comment type="interaction">
    <interactant intactId="EBI-701918">
        <id>P35221</id>
    </interactant>
    <interactant intactId="EBI-351479">
        <id>Q9UHB6</id>
        <label>LIMA1</label>
    </interactant>
    <organismsDiffer>false</organismsDiffer>
    <experiments>2</experiments>
</comment>
<comment type="interaction">
    <interactant intactId="EBI-701918">
        <id>P35221</id>
    </interactant>
    <interactant intactId="EBI-307386">
        <id>P25963</id>
        <label>NFKBIA</label>
    </interactant>
    <organismsDiffer>false</organismsDiffer>
    <experiments>5</experiments>
</comment>
<comment type="interaction">
    <interactant intactId="EBI-701918">
        <id>P35221</id>
    </interactant>
    <interactant intactId="EBI-717233">
        <id>Q9H0H5</id>
        <label>RACGAP1</label>
    </interactant>
    <organismsDiffer>false</organismsDiffer>
    <experiments>2</experiments>
</comment>
<comment type="interaction">
    <interactant intactId="EBI-701918">
        <id>P35221</id>
    </interactant>
    <interactant intactId="EBI-11027067">
        <id>P18206-2</id>
        <label>VCL</label>
    </interactant>
    <organismsDiffer>false</organismsDiffer>
    <experiments>2</experiments>
</comment>
<comment type="interaction">
    <interactant intactId="EBI-701918">
        <id>P35221</id>
    </interactant>
    <interactant intactId="EBI-15677021">
        <id>Q9ERG0-2</id>
        <label>Lima1</label>
    </interactant>
    <organismsDiffer>true</organismsDiffer>
    <experiments>2</experiments>
</comment>
<comment type="interaction">
    <interactant intactId="EBI-7053242">
        <id>P35221-1</id>
    </interactant>
    <interactant intactId="EBI-15677021">
        <id>Q9ERG0-2</id>
        <label>Lima1</label>
    </interactant>
    <organismsDiffer>true</organismsDiffer>
    <experiments>2</experiments>
</comment>
<comment type="subcellular location">
    <subcellularLocation>
        <location evidence="1">Cytoplasm</location>
        <location evidence="1">Cytoskeleton</location>
    </subcellularLocation>
    <subcellularLocation>
        <location evidence="10">Cell junction</location>
        <location evidence="10">Adherens junction</location>
    </subcellularLocation>
    <subcellularLocation>
        <location evidence="1">Cell membrane</location>
        <topology evidence="21">Peripheral membrane protein</topology>
        <orientation evidence="1">Cytoplasmic side</orientation>
    </subcellularLocation>
    <subcellularLocation>
        <location evidence="4 6">Cell junction</location>
    </subcellularLocation>
    <subcellularLocation>
        <location evidence="2">Cytoplasm</location>
    </subcellularLocation>
    <subcellularLocation>
        <location evidence="6">Nucleus</location>
    </subcellularLocation>
    <text evidence="1">Found at cell-cell boundaries and probably at cell-matrix boundaries.</text>
</comment>
<comment type="subcellular location">
    <molecule>Isoform 3</molecule>
    <subcellularLocation>
        <location evidence="8">Cell membrane</location>
        <topology evidence="8">Peripheral membrane protein</topology>
        <orientation evidence="8">Cytoplasmic side</orientation>
    </subcellularLocation>
</comment>
<comment type="alternative products">
    <event type="alternative splicing"/>
    <isoform>
        <id>P35221-1</id>
        <name>1</name>
        <name evidence="19">CTNNA1a</name>
        <sequence type="displayed"/>
    </isoform>
    <isoform>
        <id>P35221-2</id>
        <name>2</name>
        <sequence type="described" ref="VSP_017494"/>
    </isoform>
    <isoform>
        <id>P35221-3</id>
        <name>3</name>
        <name evidence="8">CTNNA1b</name>
        <sequence type="described" ref="VSP_047810"/>
    </isoform>
</comment>
<comment type="tissue specificity">
    <molecule>Isoform 1</molecule>
    <text evidence="8">Ubiquitously expressed in normal tissues.</text>
</comment>
<comment type="tissue specificity">
    <molecule>Isoform 3</molecule>
    <text evidence="8">Abundantly expressed in brain and cerebellum, also expressed in the placenta, liver, lung, colon, heart, pancreas, stomach and thymus.</text>
</comment>
<comment type="PTM">
    <text evidence="5">Sumoylated.</text>
</comment>
<comment type="PTM">
    <text evidence="1">Phosphorylation seems to contribute to the strength of cell-cell adhesion rather than to the basic capacity for cell-cell adhesion.</text>
</comment>
<comment type="disease">
    <text evidence="9 11">Germline CTNNA1 truncating mutations have been detected in patients with hereditary diffuse gastric cancer (HDGC) and may play a role in disease susceptibility. Diffuse gastric cancer is a malignant disease characterized by poorly differentiated infiltrating lesions resulting in thickening of the stomach. Malignant tumors start in the stomach, can spread to the esophagus or the small intestine, and can extend through the stomach wall to nearby lymph nodes and organs. It also can metastasize to other parts of the body.</text>
</comment>
<comment type="disease" evidence="12">
    <disease id="DI-04710">
        <name>Macular dystrophy, patterned, 2</name>
        <acronym>MDPT2</acronym>
        <description>A form of retinal patterned dystrophy, a heterogeneous group of macular disorders caused by abnormal accumulation of lipofuscin in the retinal pigment epithelium. Lipofuscin distribution can show various shapes that define different types of macular dystrophy, including reticular (fishnet-like) dystrophy, macroreticular (spider-shaped) dystrophy and butterfly-shaped pigment dystrophy. MDPT2 is an autosomal dominant form characterized by bilateral accumulation of pigment in the macular area that resembles the wings of a butterfly.</description>
        <dbReference type="MIM" id="608970"/>
    </disease>
    <text>The disease is caused by variants affecting the gene represented in this entry.</text>
</comment>
<comment type="miscellaneous">
    <molecule>Isoform 3</molecule>
    <text evidence="21">Expressed at high levels in the nervous system. Lacks the beta-catenin interaction domain.</text>
</comment>
<comment type="similarity">
    <text evidence="21">Belongs to the vinculin/alpha-catenin family.</text>
</comment>
<reference key="1">
    <citation type="journal article" date="1994" name="Cytogenet. Cell Genet.">
        <title>Structure, expression and chromosome assignment of the human catenin (cadherin-associated protein) alpha 1 gene (CTNNA1).</title>
        <authorList>
            <person name="Furukawa Y."/>
            <person name="Nakatsuru S."/>
            <person name="Nagafuchi A."/>
            <person name="Tsukita S."/>
            <person name="Muto T."/>
            <person name="Nakamura Y."/>
            <person name="Horii A."/>
        </authorList>
    </citation>
    <scope>NUCLEOTIDE SEQUENCE [MRNA] (ISOFORM 1)</scope>
    <source>
        <tissue>Brain</tissue>
    </source>
</reference>
<reference key="2">
    <citation type="journal article" date="1993" name="Biochem. Biophys. Res. Commun.">
        <title>Cloning of the human alpha-catenin cDNA and its aberrant mRNA in a human cancer cell line.</title>
        <authorList>
            <person name="Oda T."/>
            <person name="Kanai Y."/>
            <person name="Shimoyama Y."/>
            <person name="Nagafuchi A."/>
            <person name="Tsukita S."/>
            <person name="Hirohashi S."/>
        </authorList>
    </citation>
    <scope>NUCLEOTIDE SEQUENCE [MRNA] (ISOFORM 1)</scope>
    <source>
        <tissue>Colon</tissue>
        <tissue>Lung</tissue>
    </source>
</reference>
<reference key="3">
    <citation type="journal article" date="1994" name="Biochem. Biophys. Res. Commun.">
        <title>Molecular cloning reveals alternative splice forms of human alpha(E)-catenin.</title>
        <authorList>
            <person name="Rimm D.L."/>
            <person name="Kebriaei P."/>
            <person name="Morrow J.S."/>
        </authorList>
    </citation>
    <scope>NUCLEOTIDE SEQUENCE [MRNA] (ISOFORMS 1 AND 2)</scope>
    <source>
        <tissue>Colon</tissue>
    </source>
</reference>
<reference key="4">
    <citation type="journal article" date="2011" name="Biochem. Biophys. Res. Commun.">
        <title>Bidirectional transcription from human LRRTM2/CTNNA1 and LRRTM1/CTNNA2 gene loci leads to expression of N-terminally truncated CTNNA1 and CTNNA2 isoforms.</title>
        <authorList>
            <person name="Kask M."/>
            <person name="Pruunsild P."/>
            <person name="Timmusk T."/>
        </authorList>
    </citation>
    <scope>NUCLEOTIDE SEQUENCE [MRNA] (ISOFORM 3)</scope>
    <scope>ALTERNATIVE SPLICING</scope>
    <scope>SUBCELLULAR LOCATION (ISOFORM 3)</scope>
    <scope>TISSUE SPECIFICITY (ISOFORMS 1 AND 3)</scope>
    <source>
        <tissue>Hippocampus</tissue>
    </source>
</reference>
<reference key="5">
    <citation type="submission" date="1998-10" db="EMBL/GenBank/DDBJ databases">
        <title>Genomic organization of the human alphaE-catenin gene (CTNNA1).</title>
        <authorList>
            <person name="Nollet F.H."/>
            <person name="Vanpoucke G.G."/>
            <person name="van Roy F.M."/>
        </authorList>
    </citation>
    <scope>NUCLEOTIDE SEQUENCE [GENOMIC DNA]</scope>
</reference>
<reference key="6">
    <citation type="submission" date="2005-01" db="EMBL/GenBank/DDBJ databases">
        <authorList>
            <consortium name="NIEHS SNPs program"/>
        </authorList>
    </citation>
    <scope>NUCLEOTIDE SEQUENCE [GENOMIC DNA]</scope>
    <scope>VARIANTS VAL-179 AND SER-219</scope>
</reference>
<reference key="7">
    <citation type="journal article" date="2004" name="Nature">
        <title>The DNA sequence and comparative analysis of human chromosome 5.</title>
        <authorList>
            <person name="Schmutz J."/>
            <person name="Martin J."/>
            <person name="Terry A."/>
            <person name="Couronne O."/>
            <person name="Grimwood J."/>
            <person name="Lowry S."/>
            <person name="Gordon L.A."/>
            <person name="Scott D."/>
            <person name="Xie G."/>
            <person name="Huang W."/>
            <person name="Hellsten U."/>
            <person name="Tran-Gyamfi M."/>
            <person name="She X."/>
            <person name="Prabhakar S."/>
            <person name="Aerts A."/>
            <person name="Altherr M."/>
            <person name="Bajorek E."/>
            <person name="Black S."/>
            <person name="Branscomb E."/>
            <person name="Caoile C."/>
            <person name="Challacombe J.F."/>
            <person name="Chan Y.M."/>
            <person name="Denys M."/>
            <person name="Detter J.C."/>
            <person name="Escobar J."/>
            <person name="Flowers D."/>
            <person name="Fotopulos D."/>
            <person name="Glavina T."/>
            <person name="Gomez M."/>
            <person name="Gonzales E."/>
            <person name="Goodstein D."/>
            <person name="Grigoriev I."/>
            <person name="Groza M."/>
            <person name="Hammon N."/>
            <person name="Hawkins T."/>
            <person name="Haydu L."/>
            <person name="Israni S."/>
            <person name="Jett J."/>
            <person name="Kadner K."/>
            <person name="Kimball H."/>
            <person name="Kobayashi A."/>
            <person name="Lopez F."/>
            <person name="Lou Y."/>
            <person name="Martinez D."/>
            <person name="Medina C."/>
            <person name="Morgan J."/>
            <person name="Nandkeshwar R."/>
            <person name="Noonan J.P."/>
            <person name="Pitluck S."/>
            <person name="Pollard M."/>
            <person name="Predki P."/>
            <person name="Priest J."/>
            <person name="Ramirez L."/>
            <person name="Retterer J."/>
            <person name="Rodriguez A."/>
            <person name="Rogers S."/>
            <person name="Salamov A."/>
            <person name="Salazar A."/>
            <person name="Thayer N."/>
            <person name="Tice H."/>
            <person name="Tsai M."/>
            <person name="Ustaszewska A."/>
            <person name="Vo N."/>
            <person name="Wheeler J."/>
            <person name="Wu K."/>
            <person name="Yang J."/>
            <person name="Dickson M."/>
            <person name="Cheng J.-F."/>
            <person name="Eichler E.E."/>
            <person name="Olsen A."/>
            <person name="Pennacchio L.A."/>
            <person name="Rokhsar D.S."/>
            <person name="Richardson P."/>
            <person name="Lucas S.M."/>
            <person name="Myers R.M."/>
            <person name="Rubin E.M."/>
        </authorList>
    </citation>
    <scope>NUCLEOTIDE SEQUENCE [LARGE SCALE GENOMIC DNA]</scope>
</reference>
<reference key="8">
    <citation type="submission" date="2005-09" db="EMBL/GenBank/DDBJ databases">
        <authorList>
            <person name="Mural R.J."/>
            <person name="Istrail S."/>
            <person name="Sutton G."/>
            <person name="Florea L."/>
            <person name="Halpern A.L."/>
            <person name="Mobarry C.M."/>
            <person name="Lippert R."/>
            <person name="Walenz B."/>
            <person name="Shatkay H."/>
            <person name="Dew I."/>
            <person name="Miller J.R."/>
            <person name="Flanigan M.J."/>
            <person name="Edwards N.J."/>
            <person name="Bolanos R."/>
            <person name="Fasulo D."/>
            <person name="Halldorsson B.V."/>
            <person name="Hannenhalli S."/>
            <person name="Turner R."/>
            <person name="Yooseph S."/>
            <person name="Lu F."/>
            <person name="Nusskern D.R."/>
            <person name="Shue B.C."/>
            <person name="Zheng X.H."/>
            <person name="Zhong F."/>
            <person name="Delcher A.L."/>
            <person name="Huson D.H."/>
            <person name="Kravitz S.A."/>
            <person name="Mouchard L."/>
            <person name="Reinert K."/>
            <person name="Remington K.A."/>
            <person name="Clark A.G."/>
            <person name="Waterman M.S."/>
            <person name="Eichler E.E."/>
            <person name="Adams M.D."/>
            <person name="Hunkapiller M.W."/>
            <person name="Myers E.W."/>
            <person name="Venter J.C."/>
        </authorList>
    </citation>
    <scope>NUCLEOTIDE SEQUENCE [LARGE SCALE GENOMIC DNA]</scope>
</reference>
<reference key="9">
    <citation type="journal article" date="2004" name="Genome Res.">
        <title>The status, quality, and expansion of the NIH full-length cDNA project: the Mammalian Gene Collection (MGC).</title>
        <authorList>
            <consortium name="The MGC Project Team"/>
        </authorList>
    </citation>
    <scope>NUCLEOTIDE SEQUENCE [LARGE SCALE MRNA] (ISOFORMS 1 AND 3)</scope>
    <source>
        <tissue>Brain</tissue>
        <tissue>Lung</tissue>
    </source>
</reference>
<reference key="10">
    <citation type="submission" date="2008-12" db="UniProtKB">
        <authorList>
            <person name="Bienvenut W.V."/>
            <person name="Zebisch A."/>
            <person name="Kolch W."/>
        </authorList>
    </citation>
    <scope>PROTEIN SEQUENCE OF 2-12; 166-178 AND 617-623</scope>
    <scope>CLEAVAGE OF INITIATOR METHIONINE</scope>
    <scope>ACETYLATION AT THR-2</scope>
    <scope>IDENTIFICATION BY MASS SPECTROMETRY</scope>
    <source>
        <tissue>Colon carcinoma</tissue>
    </source>
</reference>
<reference key="11">
    <citation type="journal article" date="1994" name="Genomics">
        <title>Assignment of the human alpha-catenin gene (CTNNA1) to chromosome 5q21-q22.</title>
        <authorList>
            <person name="McPherson J.D."/>
            <person name="Morton R.A."/>
            <person name="Ewing C.M."/>
            <person name="Wasmuth J.J."/>
            <person name="Overhauser J."/>
            <person name="Nagafuchi A."/>
            <person name="Tsukita S."/>
            <person name="Isaacs W.B."/>
        </authorList>
    </citation>
    <scope>NUCLEOTIDE SEQUENCE [MRNA] OF 159-250</scope>
    <source>
        <tissue>Prostate</tissue>
    </source>
</reference>
<reference key="12">
    <citation type="journal article" date="1994" name="FEBS Lett.">
        <title>Distinct cadherin-catenin complexes in Ca(2+)-dependent cell-cell adhesion.</title>
        <authorList>
            <person name="Butz S."/>
            <person name="Kemler R."/>
        </authorList>
    </citation>
    <scope>IDENTIFICATION IN AN E-CADHERIN/CATENIN ADHESION COMPLEX</scope>
</reference>
<reference key="13">
    <citation type="journal article" date="1997" name="J. Biol. Chem.">
        <title>Alpha-catenin can form asymmetric homodimeric complexes and/or heterodimeric complexes with beta-catenin.</title>
        <authorList>
            <person name="Koslov E.R."/>
            <person name="Maupin P."/>
            <person name="Pradhan D."/>
            <person name="Morrow J.S."/>
            <person name="Rimm D.L."/>
        </authorList>
    </citation>
    <scope>SUBUNIT</scope>
    <scope>INTERACTION WITH CTNNB1</scope>
</reference>
<reference key="14">
    <citation type="journal article" date="1997" name="J. Cell Sci.">
        <title>Characterization of the interactions of alpha-catenin with alpha-actinin and beta-catenin/plakoglobin.</title>
        <authorList>
            <person name="Nieset J.E."/>
            <person name="Redfield A.R."/>
            <person name="Jin F."/>
            <person name="Knudsen K.A."/>
            <person name="Johnson K.R."/>
            <person name="Wheelock M.J."/>
        </authorList>
    </citation>
    <scope>INTERACTION WITH JUP; CTNNB1 AND ALPHA-ACTININ</scope>
</reference>
<reference key="15">
    <citation type="journal article" date="1999" name="Int. J. Cancer">
        <title>Antigens recognized by autologous antibody in patients with renal-cell carcinoma.</title>
        <authorList>
            <person name="Scanlan M.J."/>
            <person name="Gordan J.D."/>
            <person name="Williamson B."/>
            <person name="Stockert E."/>
            <person name="Bander N.H."/>
            <person name="Jongeneel C.V."/>
            <person name="Gure A.O."/>
            <person name="Jaeger D."/>
            <person name="Jaeger E."/>
            <person name="Knuth A."/>
            <person name="Chen Y.-T."/>
            <person name="Old L.J."/>
        </authorList>
    </citation>
    <scope>IDENTIFICATION AS A RENAL CANCER ANTIGEN</scope>
    <source>
        <tissue>Renal cell carcinoma</tissue>
    </source>
</reference>
<reference key="16">
    <citation type="journal article" date="2003" name="J. Biol. Chem.">
        <title>The LIM protein Ajuba is recruited to cadherin-dependent cell junctions through an association with alpha-catenin.</title>
        <authorList>
            <person name="Marie H."/>
            <person name="Pratt S.J."/>
            <person name="Betson M."/>
            <person name="Epple H."/>
            <person name="Kittler J.T."/>
            <person name="Meek L."/>
            <person name="Moss S.J."/>
            <person name="Troyanovsky S."/>
            <person name="Attwell D."/>
            <person name="Longmore G.D."/>
            <person name="Braga V.M."/>
        </authorList>
    </citation>
    <scope>INTERACTION WITH AJUBA</scope>
    <scope>SUBCELLULAR LOCATION</scope>
</reference>
<reference key="17">
    <citation type="journal article" date="2005" name="J. Biol. Chem.">
        <title>Systematic identification and analysis of mammalian small ubiquitin-like modifier substrates.</title>
        <authorList>
            <person name="Gocke C.B."/>
            <person name="Yu H."/>
            <person name="Kang J."/>
        </authorList>
    </citation>
    <scope>SUMOYLATION</scope>
</reference>
<reference key="18">
    <citation type="journal article" date="2005" name="Nat. Cell Biol.">
        <title>ARHGAP10 is necessary for alpha-catenin recruitment at adherens junctions and for Listeria invasion.</title>
        <authorList>
            <person name="Sousa S."/>
            <person name="Cabanes D."/>
            <person name="Archambaud C."/>
            <person name="Colland F."/>
            <person name="Lemichez E."/>
            <person name="Popoff M."/>
            <person name="Boisson-Dupuis S."/>
            <person name="Gouin E."/>
            <person name="Lecuit M."/>
            <person name="Legrain P."/>
            <person name="Cossart P."/>
        </authorList>
    </citation>
    <scope>INTERACTION WITH ARHGAP21</scope>
    <scope>SUBCELLULAR LOCATION</scope>
</reference>
<reference key="19">
    <citation type="journal article" date="2006" name="Cell">
        <title>Global, in vivo, and site-specific phosphorylation dynamics in signaling networks.</title>
        <authorList>
            <person name="Olsen J.V."/>
            <person name="Blagoev B."/>
            <person name="Gnad F."/>
            <person name="Macek B."/>
            <person name="Kumar C."/>
            <person name="Mortensen P."/>
            <person name="Mann M."/>
        </authorList>
    </citation>
    <scope>PHOSPHORYLATION [LARGE SCALE ANALYSIS] AT SER-641</scope>
    <scope>IDENTIFICATION BY MASS SPECTROMETRY [LARGE SCALE ANALYSIS]</scope>
    <source>
        <tissue>Cervix carcinoma</tissue>
    </source>
</reference>
<reference key="20">
    <citation type="journal article" date="2006" name="Nat. Biotechnol.">
        <title>A probability-based approach for high-throughput protein phosphorylation analysis and site localization.</title>
        <authorList>
            <person name="Beausoleil S.A."/>
            <person name="Villen J."/>
            <person name="Gerber S.A."/>
            <person name="Rush J."/>
            <person name="Gygi S.P."/>
        </authorList>
    </citation>
    <scope>IDENTIFICATION BY MASS SPECTROMETRY [LARGE SCALE ANALYSIS]</scope>
    <source>
        <tissue>Cervix carcinoma</tissue>
    </source>
</reference>
<reference key="21">
    <citation type="journal article" date="2006" name="Pituitary">
        <title>Phosphoproteomic analysis of the human pituitary.</title>
        <authorList>
            <person name="Beranova-Giorgianni S."/>
            <person name="Zhao Y."/>
            <person name="Desiderio D.M."/>
            <person name="Giorgianni F."/>
        </authorList>
    </citation>
    <scope>PHOSPHORYLATION [LARGE SCALE ANALYSIS] AT SER-641</scope>
    <scope>IDENTIFICATION BY MASS SPECTROMETRY [LARGE SCALE ANALYSIS]</scope>
    <source>
        <tissue>Pituitary</tissue>
    </source>
</reference>
<reference key="22">
    <citation type="journal article" date="2007" name="Electrophoresis">
        <title>Toward a global characterization of the phosphoproteome in prostate cancer cells: identification of phosphoproteins in the LNCaP cell line.</title>
        <authorList>
            <person name="Giorgianni F."/>
            <person name="Zhao Y."/>
            <person name="Desiderio D.M."/>
            <person name="Beranova-Giorgianni S."/>
        </authorList>
    </citation>
    <scope>PHOSPHORYLATION [LARGE SCALE ANALYSIS] AT SER-652</scope>
    <scope>IDENTIFICATION BY MASS SPECTROMETRY [LARGE SCALE ANALYSIS]</scope>
    <source>
        <tissue>Prostate cancer</tissue>
    </source>
</reference>
<reference key="23">
    <citation type="journal article" date="2008" name="J. Proteome Res.">
        <title>Combining protein-based IMAC, peptide-based IMAC, and MudPIT for efficient phosphoproteomic analysis.</title>
        <authorList>
            <person name="Cantin G.T."/>
            <person name="Yi W."/>
            <person name="Lu B."/>
            <person name="Park S.K."/>
            <person name="Xu T."/>
            <person name="Lee J.-D."/>
            <person name="Yates J.R. III"/>
        </authorList>
    </citation>
    <scope>PHOSPHORYLATION [LARGE SCALE ANALYSIS] AT SER-641</scope>
    <scope>IDENTIFICATION BY MASS SPECTROMETRY [LARGE SCALE ANALYSIS]</scope>
    <source>
        <tissue>Cervix carcinoma</tissue>
    </source>
</reference>
<reference key="24">
    <citation type="journal article" date="2008" name="Proc. Natl. Acad. Sci. U.S.A.">
        <title>A quantitative atlas of mitotic phosphorylation.</title>
        <authorList>
            <person name="Dephoure N."/>
            <person name="Zhou C."/>
            <person name="Villen J."/>
            <person name="Beausoleil S.A."/>
            <person name="Bakalarski C.E."/>
            <person name="Elledge S.J."/>
            <person name="Gygi S.P."/>
        </authorList>
    </citation>
    <scope>PHOSPHORYLATION [LARGE SCALE ANALYSIS] AT SER-641 AND SER-652</scope>
    <scope>IDENTIFICATION BY MASS SPECTROMETRY [LARGE SCALE ANALYSIS]</scope>
    <source>
        <tissue>Cervix carcinoma</tissue>
    </source>
</reference>
<reference key="25">
    <citation type="journal article" date="2008" name="Proc. Natl. Acad. Sci. U.S.A.">
        <title>EPLIN mediates linkage of the cadherin catenin complex to F-actin and stabilizes the circumferential actin belt.</title>
        <authorList>
            <person name="Abe K."/>
            <person name="Takeichi M."/>
        </authorList>
    </citation>
    <scope>INTERACTION WITH LIMA1</scope>
</reference>
<reference key="26">
    <citation type="journal article" date="2008" name="Proteomics">
        <title>Large-scale phosphoproteome analysis of human liver tissue by enrichment and fractionation of phosphopeptides with strong anion exchange chromatography.</title>
        <authorList>
            <person name="Han G."/>
            <person name="Ye M."/>
            <person name="Zhou H."/>
            <person name="Jiang X."/>
            <person name="Feng S."/>
            <person name="Jiang X."/>
            <person name="Tian R."/>
            <person name="Wan D."/>
            <person name="Zou H."/>
            <person name="Gu J."/>
        </authorList>
    </citation>
    <scope>PHOSPHORYLATION [LARGE SCALE ANALYSIS] AT SER-641 AND THR-645</scope>
    <scope>IDENTIFICATION BY MASS SPECTROMETRY [LARGE SCALE ANALYSIS]</scope>
    <source>
        <tissue>Liver</tissue>
    </source>
</reference>
<reference key="27">
    <citation type="journal article" date="2009" name="Anal. Chem.">
        <title>Lys-N and trypsin cover complementary parts of the phosphoproteome in a refined SCX-based approach.</title>
        <authorList>
            <person name="Gauci S."/>
            <person name="Helbig A.O."/>
            <person name="Slijper M."/>
            <person name="Krijgsveld J."/>
            <person name="Heck A.J."/>
            <person name="Mohammed S."/>
        </authorList>
    </citation>
    <scope>IDENTIFICATION BY MASS SPECTROMETRY [LARGE SCALE ANALYSIS]</scope>
</reference>
<reference key="28">
    <citation type="journal article" date="2009" name="Mol. Cell. Proteomics">
        <title>Large-scale proteomics analysis of the human kinome.</title>
        <authorList>
            <person name="Oppermann F.S."/>
            <person name="Gnad F."/>
            <person name="Olsen J.V."/>
            <person name="Hornberger R."/>
            <person name="Greff Z."/>
            <person name="Keri G."/>
            <person name="Mann M."/>
            <person name="Daub H."/>
        </authorList>
    </citation>
    <scope>PHOSPHORYLATION [LARGE SCALE ANALYSIS] AT SER-641</scope>
    <scope>IDENTIFICATION BY MASS SPECTROMETRY [LARGE SCALE ANALYSIS]</scope>
</reference>
<reference key="29">
    <citation type="journal article" date="2009" name="Sci. Signal.">
        <title>Quantitative phosphoproteomic analysis of T cell receptor signaling reveals system-wide modulation of protein-protein interactions.</title>
        <authorList>
            <person name="Mayya V."/>
            <person name="Lundgren D.H."/>
            <person name="Hwang S.-I."/>
            <person name="Rezaul K."/>
            <person name="Wu L."/>
            <person name="Eng J.K."/>
            <person name="Rodionov V."/>
            <person name="Han D.K."/>
        </authorList>
    </citation>
    <scope>PHOSPHORYLATION [LARGE SCALE ANALYSIS] AT SER-641</scope>
    <scope>IDENTIFICATION BY MASS SPECTROMETRY [LARGE SCALE ANALYSIS]</scope>
    <source>
        <tissue>Leukemic T-cell</tissue>
    </source>
</reference>
<reference key="30">
    <citation type="journal article" date="2010" name="Sci. Signal.">
        <title>Quantitative phosphoproteomics reveals widespread full phosphorylation site occupancy during mitosis.</title>
        <authorList>
            <person name="Olsen J.V."/>
            <person name="Vermeulen M."/>
            <person name="Santamaria A."/>
            <person name="Kumar C."/>
            <person name="Miller M.L."/>
            <person name="Jensen L.J."/>
            <person name="Gnad F."/>
            <person name="Cox J."/>
            <person name="Jensen T.S."/>
            <person name="Nigg E.A."/>
            <person name="Brunak S."/>
            <person name="Mann M."/>
        </authorList>
    </citation>
    <scope>PHOSPHORYLATION [LARGE SCALE ANALYSIS] AT SER-641</scope>
    <scope>IDENTIFICATION BY MASS SPECTROMETRY [LARGE SCALE ANALYSIS]</scope>
    <source>
        <tissue>Cervix carcinoma</tissue>
    </source>
</reference>
<reference key="31">
    <citation type="journal article" date="2011" name="BMC Syst. Biol.">
        <title>Initial characterization of the human central proteome.</title>
        <authorList>
            <person name="Burkard T.R."/>
            <person name="Planyavsky M."/>
            <person name="Kaupe I."/>
            <person name="Breitwieser F.P."/>
            <person name="Buerckstuemmer T."/>
            <person name="Bennett K.L."/>
            <person name="Superti-Furga G."/>
            <person name="Colinge J."/>
        </authorList>
    </citation>
    <scope>IDENTIFICATION BY MASS SPECTROMETRY [LARGE SCALE ANALYSIS]</scope>
</reference>
<reference key="32">
    <citation type="journal article" date="2011" name="Sci. Signal.">
        <title>System-wide temporal characterization of the proteome and phosphoproteome of human embryonic stem cell differentiation.</title>
        <authorList>
            <person name="Rigbolt K.T."/>
            <person name="Prokhorova T.A."/>
            <person name="Akimov V."/>
            <person name="Henningsen J."/>
            <person name="Johansen P.T."/>
            <person name="Kratchmarova I."/>
            <person name="Kassem M."/>
            <person name="Mann M."/>
            <person name="Olsen J.V."/>
            <person name="Blagoev B."/>
        </authorList>
    </citation>
    <scope>PHOSPHORYLATION [LARGE SCALE ANALYSIS] AT THR-634; SER-641 AND SER-652</scope>
    <scope>IDENTIFICATION BY MASS SPECTROMETRY [LARGE SCALE ANALYSIS]</scope>
</reference>
<reference key="33">
    <citation type="journal article" date="2013" name="J. Proteome Res.">
        <title>Toward a comprehensive characterization of a human cancer cell phosphoproteome.</title>
        <authorList>
            <person name="Zhou H."/>
            <person name="Di Palma S."/>
            <person name="Preisinger C."/>
            <person name="Peng M."/>
            <person name="Polat A.N."/>
            <person name="Heck A.J."/>
            <person name="Mohammed S."/>
        </authorList>
    </citation>
    <scope>PHOSPHORYLATION [LARGE SCALE ANALYSIS] AT SER-641</scope>
    <scope>IDENTIFICATION BY MASS SPECTROMETRY [LARGE SCALE ANALYSIS]</scope>
    <source>
        <tissue>Cervix carcinoma</tissue>
        <tissue>Erythroleukemia</tissue>
    </source>
</reference>
<reference key="34">
    <citation type="journal article" date="2014" name="J. Proteomics">
        <title>An enzyme assisted RP-RPLC approach for in-depth analysis of human liver phosphoproteome.</title>
        <authorList>
            <person name="Bian Y."/>
            <person name="Song C."/>
            <person name="Cheng K."/>
            <person name="Dong M."/>
            <person name="Wang F."/>
            <person name="Huang J."/>
            <person name="Sun D."/>
            <person name="Wang L."/>
            <person name="Ye M."/>
            <person name="Zou H."/>
        </authorList>
    </citation>
    <scope>PHOSPHORYLATION [LARGE SCALE ANALYSIS] AT SER-264; SER-268; SER-295; SER-297; THR-634; SER-641 AND SER-851</scope>
    <scope>IDENTIFICATION BY MASS SPECTROMETRY [LARGE SCALE ANALYSIS]</scope>
    <source>
        <tissue>Liver</tissue>
    </source>
</reference>
<reference key="35">
    <citation type="journal article" date="2015" name="JAMA Oncol.">
        <title>Hereditary diffuse gastric cancer syndrome: CDH1 mutations and beyond.</title>
        <authorList>
            <person name="Hansford S."/>
            <person name="Kaurah P."/>
            <person name="Li-Chang H."/>
            <person name="Woo M."/>
            <person name="Senz J."/>
            <person name="Pinheiro H."/>
            <person name="Schrader K.A."/>
            <person name="Schaeffer D.F."/>
            <person name="Shumansky K."/>
            <person name="Zogopoulos G."/>
            <person name="Santos T.A."/>
            <person name="Claro I."/>
            <person name="Carvalho J."/>
            <person name="Nielsen C."/>
            <person name="Padilla S."/>
            <person name="Lum A."/>
            <person name="Talhouk A."/>
            <person name="Baker-Lange K."/>
            <person name="Richardson S."/>
            <person name="Lewis I."/>
            <person name="Lindor N.M."/>
            <person name="Pennell E."/>
            <person name="MacMillan A."/>
            <person name="Fernandez B."/>
            <person name="Keller G."/>
            <person name="Lynch H."/>
            <person name="Shah S.P."/>
            <person name="Guilford P."/>
            <person name="Gallinger S."/>
            <person name="Corso G."/>
            <person name="Roviello F."/>
            <person name="Caldas C."/>
            <person name="Oliveira C."/>
            <person name="Pharoah P.D."/>
            <person name="Huntsman D.G."/>
        </authorList>
    </citation>
    <scope>POSSIBLE INVOLVEMENT IN HDGC</scope>
</reference>
<reference key="36">
    <citation type="journal article" date="2015" name="J. Cell Sci.">
        <title>alpha-Catenin phosphorylation promotes intercellular adhesion through a dual-kinase mechanism.</title>
        <authorList>
            <person name="Escobar D.J."/>
            <person name="Desai R."/>
            <person name="Ishiyama N."/>
            <person name="Folmsbee S.S."/>
            <person name="Novak M.N."/>
            <person name="Flozak A.S."/>
            <person name="Daugherty R.L."/>
            <person name="Mo R."/>
            <person name="Nanavati D."/>
            <person name="Sarpal R."/>
            <person name="Leckband D."/>
            <person name="Ikura M."/>
            <person name="Tepass U."/>
            <person name="Gottardi C.J."/>
        </authorList>
    </citation>
    <scope>FUNCTION</scope>
    <scope>SUBCELLULAR LOCATION</scope>
    <scope>PHOSPHORYLATION AT SER-641; SER-652; SER-655 AND THR-658</scope>
    <scope>MUTAGENESIS OF SER-641; 652-SER--THR-658 AND SER-652</scope>
</reference>
<reference key="37">
    <citation type="journal article" date="2017" name="Mucosal Immunol.">
        <title>Cadherin 26 is an alpha integrin-binding epithelial receptor regulated during allergic inflammation.</title>
        <authorList>
            <person name="Caldwell J.M."/>
            <person name="Collins M.H."/>
            <person name="Kemme K.A."/>
            <person name="Sherrill J.D."/>
            <person name="Wen T."/>
            <person name="Rochman M."/>
            <person name="Stucke E.M."/>
            <person name="Amin L."/>
            <person name="Tai H."/>
            <person name="Putnam P.E."/>
            <person name="Jimenez-Dalmaroni M.J."/>
            <person name="Wormald M.R."/>
            <person name="Porollo A."/>
            <person name="Abonia J.P."/>
            <person name="Rothenberg M.E."/>
        </authorList>
    </citation>
    <scope>IDENTIFICATION IN A CADHERIN/CATENIN ADHESION COMPLEX</scope>
</reference>
<reference key="38">
    <citation type="journal article" date="2017" name="Nat. Struct. Mol. Biol.">
        <title>Site-specific mapping of the human SUMO proteome reveals co-modification with phosphorylation.</title>
        <authorList>
            <person name="Hendriks I.A."/>
            <person name="Lyon D."/>
            <person name="Young C."/>
            <person name="Jensen L.J."/>
            <person name="Vertegaal A.C."/>
            <person name="Nielsen M.L."/>
        </authorList>
    </citation>
    <scope>SUMOYLATION [LARGE SCALE ANALYSIS] AT LYS-57 AND LYS-797</scope>
    <scope>IDENTIFICATION BY MASS SPECTROMETRY [LARGE SCALE ANALYSIS]</scope>
</reference>
<reference key="39">
    <citation type="journal article" date="2001" name="EMBO J.">
        <title>Crystal structure of the M-fragment of alpha-catenin: implications for modulation of cell adhesion.</title>
        <authorList>
            <person name="Yang J."/>
            <person name="Dokurno P."/>
            <person name="Tonks N.K."/>
            <person name="Barford D."/>
        </authorList>
    </citation>
    <scope>X-RAY CRYSTALLOGRAPHY (2.2 ANGSTROMS) OF 377-632</scope>
    <scope>PARTIAL PROTEIN SEQUENCE</scope>
    <scope>IDENTIFICATION BY MASS SPECTROMETRY</scope>
</reference>
<reference key="40">
    <citation type="journal article" date="2016" name="Nat. Genet.">
        <title>Mutations in CTNNA1 cause butterfly-shaped pigment dystrophy and perturbed retinal pigment epithelium integrity.</title>
        <authorList>
            <person name="Saksens N.T."/>
            <person name="Krebs M.P."/>
            <person name="Schoenmaker-Koller F.E."/>
            <person name="Hicks W."/>
            <person name="Yu M."/>
            <person name="Shi L."/>
            <person name="Rowe L."/>
            <person name="Collin G.B."/>
            <person name="Charette J.R."/>
            <person name="Letteboer S.J."/>
            <person name="Neveling K."/>
            <person name="van Moorsel T.W."/>
            <person name="Abu-Ltaif S."/>
            <person name="De Baere E."/>
            <person name="Walraedt S."/>
            <person name="Banfi S."/>
            <person name="Simonelli F."/>
            <person name="Cremers F.P."/>
            <person name="Boon C.J."/>
            <person name="Roepman R."/>
            <person name="Leroy B.P."/>
            <person name="Peachey N.S."/>
            <person name="Hoyng C.B."/>
            <person name="Nishina P.M."/>
            <person name="den Hollander A.I."/>
        </authorList>
    </citation>
    <scope>INVOLVEMENT IN MDPT2</scope>
    <scope>VARIANTS MDPT2 CYS-54; LYS-307; SER-318 AND MET-431</scope>
    <scope>INTERACTION WITH VCL</scope>
</reference>
<reference key="41">
    <citation type="journal article" date="2013" name="J. Pathol.">
        <title>An alpha-E-catenin (CTNNA1) mutation in hereditary diffuse gastric cancer.</title>
        <authorList>
            <person name="Majewski I.J."/>
            <person name="Kluijt I."/>
            <person name="Cats A."/>
            <person name="Scerri T.S."/>
            <person name="de Jong D."/>
            <person name="Kluin R.J."/>
            <person name="Hansford S."/>
            <person name="Hogervorst F.B."/>
            <person name="Bosma A.J."/>
            <person name="Hofland I."/>
            <person name="Winter M."/>
            <person name="Huntsman D."/>
            <person name="Jonkers J."/>
            <person name="Bahlo M."/>
            <person name="Bernards R."/>
        </authorList>
    </citation>
    <scope>POSSIBLE INVOLVEMENT IN HDGC</scope>
</reference>
<accession>P35221</accession>
<accession>Q12795</accession>
<accession>Q8N1C0</accession>
<evidence type="ECO:0000250" key="1">
    <source>
        <dbReference type="UniProtKB" id="P26231"/>
    </source>
</evidence>
<evidence type="ECO:0000250" key="2">
    <source>
        <dbReference type="UniProtKB" id="Q9PVF8"/>
    </source>
</evidence>
<evidence type="ECO:0000256" key="3">
    <source>
        <dbReference type="SAM" id="MobiDB-lite"/>
    </source>
</evidence>
<evidence type="ECO:0000269" key="4">
    <source>
    </source>
</evidence>
<evidence type="ECO:0000269" key="5">
    <source>
    </source>
</evidence>
<evidence type="ECO:0000269" key="6">
    <source>
    </source>
</evidence>
<evidence type="ECO:0000269" key="7">
    <source>
    </source>
</evidence>
<evidence type="ECO:0000269" key="8">
    <source>
    </source>
</evidence>
<evidence type="ECO:0000269" key="9">
    <source>
    </source>
</evidence>
<evidence type="ECO:0000269" key="10">
    <source>
    </source>
</evidence>
<evidence type="ECO:0000269" key="11">
    <source>
    </source>
</evidence>
<evidence type="ECO:0000269" key="12">
    <source>
    </source>
</evidence>
<evidence type="ECO:0000269" key="13">
    <source>
    </source>
</evidence>
<evidence type="ECO:0000269" key="14">
    <source>
    </source>
</evidence>
<evidence type="ECO:0000269" key="15">
    <source ref="10"/>
</evidence>
<evidence type="ECO:0000269" key="16">
    <source ref="6"/>
</evidence>
<evidence type="ECO:0000303" key="17">
    <source>
    </source>
</evidence>
<evidence type="ECO:0000303" key="18">
    <source>
    </source>
</evidence>
<evidence type="ECO:0000303" key="19">
    <source>
    </source>
</evidence>
<evidence type="ECO:0000303" key="20">
    <source>
    </source>
</evidence>
<evidence type="ECO:0000305" key="21"/>
<evidence type="ECO:0000312" key="22">
    <source>
        <dbReference type="HGNC" id="HGNC:2509"/>
    </source>
</evidence>
<evidence type="ECO:0007744" key="23">
    <source>
    </source>
</evidence>
<evidence type="ECO:0007744" key="24">
    <source>
    </source>
</evidence>
<evidence type="ECO:0007744" key="25">
    <source>
    </source>
</evidence>
<evidence type="ECO:0007744" key="26">
    <source>
    </source>
</evidence>
<evidence type="ECO:0007744" key="27">
    <source>
    </source>
</evidence>
<evidence type="ECO:0007744" key="28">
    <source>
    </source>
</evidence>
<evidence type="ECO:0007744" key="29">
    <source>
    </source>
</evidence>
<evidence type="ECO:0007744" key="30">
    <source>
    </source>
</evidence>
<evidence type="ECO:0007744" key="31">
    <source>
    </source>
</evidence>
<evidence type="ECO:0007744" key="32">
    <source>
    </source>
</evidence>
<evidence type="ECO:0007744" key="33">
    <source>
    </source>
</evidence>
<evidence type="ECO:0007744" key="34">
    <source>
    </source>
</evidence>
<evidence type="ECO:0007744" key="35">
    <source>
    </source>
</evidence>
<evidence type="ECO:0007829" key="36">
    <source>
        <dbReference type="PDB" id="1H6G"/>
    </source>
</evidence>
<evidence type="ECO:0007829" key="37">
    <source>
        <dbReference type="PDB" id="4EHP"/>
    </source>
</evidence>
<evidence type="ECO:0007829" key="38">
    <source>
        <dbReference type="PDB" id="6UPV"/>
    </source>
</evidence>
<evidence type="ECO:0007829" key="39">
    <source>
        <dbReference type="PDB" id="7UTJ"/>
    </source>
</evidence>
<protein>
    <recommendedName>
        <fullName evidence="22">Catenin alpha-1</fullName>
    </recommendedName>
    <alternativeName>
        <fullName evidence="22">Alpha E-catenin</fullName>
    </alternativeName>
    <alternativeName>
        <fullName evidence="22">Cadherin-associated protein</fullName>
    </alternativeName>
    <alternativeName>
        <fullName evidence="17">Renal carcinoma antigen NY-REN-13</fullName>
    </alternativeName>
</protein>
<name>CTNA1_HUMAN</name>
<dbReference type="EMBL" id="D14705">
    <property type="protein sequence ID" value="BAA03530.1"/>
    <property type="molecule type" value="mRNA"/>
</dbReference>
<dbReference type="EMBL" id="D13866">
    <property type="protein sequence ID" value="BAA02979.1"/>
    <property type="molecule type" value="mRNA"/>
</dbReference>
<dbReference type="EMBL" id="L23805">
    <property type="protein sequence ID" value="AAA86430.1"/>
    <property type="molecule type" value="mRNA"/>
</dbReference>
<dbReference type="EMBL" id="U03100">
    <property type="protein sequence ID" value="AAA18949.1"/>
    <property type="molecule type" value="mRNA"/>
</dbReference>
<dbReference type="EMBL" id="HQ589335">
    <property type="protein sequence ID" value="AEF32483.1"/>
    <property type="molecule type" value="mRNA"/>
</dbReference>
<dbReference type="EMBL" id="AF102803">
    <property type="protein sequence ID" value="AAC99459.1"/>
    <property type="molecule type" value="Genomic_DNA"/>
</dbReference>
<dbReference type="EMBL" id="AF102787">
    <property type="protein sequence ID" value="AAC99459.1"/>
    <property type="status" value="JOINED"/>
    <property type="molecule type" value="Genomic_DNA"/>
</dbReference>
<dbReference type="EMBL" id="AF102788">
    <property type="protein sequence ID" value="AAC99459.1"/>
    <property type="status" value="JOINED"/>
    <property type="molecule type" value="Genomic_DNA"/>
</dbReference>
<dbReference type="EMBL" id="AF102789">
    <property type="protein sequence ID" value="AAC99459.1"/>
    <property type="status" value="JOINED"/>
    <property type="molecule type" value="Genomic_DNA"/>
</dbReference>
<dbReference type="EMBL" id="AF102790">
    <property type="protein sequence ID" value="AAC99459.1"/>
    <property type="status" value="JOINED"/>
    <property type="molecule type" value="Genomic_DNA"/>
</dbReference>
<dbReference type="EMBL" id="AF102791">
    <property type="protein sequence ID" value="AAC99459.1"/>
    <property type="status" value="JOINED"/>
    <property type="molecule type" value="Genomic_DNA"/>
</dbReference>
<dbReference type="EMBL" id="AF102792">
    <property type="protein sequence ID" value="AAC99459.1"/>
    <property type="status" value="JOINED"/>
    <property type="molecule type" value="Genomic_DNA"/>
</dbReference>
<dbReference type="EMBL" id="AF102793">
    <property type="protein sequence ID" value="AAC99459.1"/>
    <property type="status" value="JOINED"/>
    <property type="molecule type" value="Genomic_DNA"/>
</dbReference>
<dbReference type="EMBL" id="AF102794">
    <property type="protein sequence ID" value="AAC99459.1"/>
    <property type="status" value="JOINED"/>
    <property type="molecule type" value="Genomic_DNA"/>
</dbReference>
<dbReference type="EMBL" id="AF102795">
    <property type="protein sequence ID" value="AAC99459.1"/>
    <property type="status" value="JOINED"/>
    <property type="molecule type" value="Genomic_DNA"/>
</dbReference>
<dbReference type="EMBL" id="AF102796">
    <property type="protein sequence ID" value="AAC99459.1"/>
    <property type="status" value="JOINED"/>
    <property type="molecule type" value="Genomic_DNA"/>
</dbReference>
<dbReference type="EMBL" id="AF102797">
    <property type="protein sequence ID" value="AAC99459.1"/>
    <property type="status" value="JOINED"/>
    <property type="molecule type" value="Genomic_DNA"/>
</dbReference>
<dbReference type="EMBL" id="AF102798">
    <property type="protein sequence ID" value="AAC99459.1"/>
    <property type="status" value="JOINED"/>
    <property type="molecule type" value="Genomic_DNA"/>
</dbReference>
<dbReference type="EMBL" id="AF102799">
    <property type="protein sequence ID" value="AAC99459.1"/>
    <property type="status" value="JOINED"/>
    <property type="molecule type" value="Genomic_DNA"/>
</dbReference>
<dbReference type="EMBL" id="AF102800">
    <property type="protein sequence ID" value="AAC99459.1"/>
    <property type="status" value="JOINED"/>
    <property type="molecule type" value="Genomic_DNA"/>
</dbReference>
<dbReference type="EMBL" id="AF102801">
    <property type="protein sequence ID" value="AAC99459.1"/>
    <property type="status" value="JOINED"/>
    <property type="molecule type" value="Genomic_DNA"/>
</dbReference>
<dbReference type="EMBL" id="AF102802">
    <property type="protein sequence ID" value="AAC99459.1"/>
    <property type="status" value="JOINED"/>
    <property type="molecule type" value="Genomic_DNA"/>
</dbReference>
<dbReference type="EMBL" id="AY884207">
    <property type="protein sequence ID" value="AAW56940.1"/>
    <property type="molecule type" value="Genomic_DNA"/>
</dbReference>
<dbReference type="EMBL" id="AC010453">
    <property type="status" value="NOT_ANNOTATED_CDS"/>
    <property type="molecule type" value="Genomic_DNA"/>
</dbReference>
<dbReference type="EMBL" id="AC011405">
    <property type="status" value="NOT_ANNOTATED_CDS"/>
    <property type="molecule type" value="Genomic_DNA"/>
</dbReference>
<dbReference type="EMBL" id="AC034243">
    <property type="status" value="NOT_ANNOTATED_CDS"/>
    <property type="molecule type" value="Genomic_DNA"/>
</dbReference>
<dbReference type="EMBL" id="AC113340">
    <property type="status" value="NOT_ANNOTATED_CDS"/>
    <property type="molecule type" value="Genomic_DNA"/>
</dbReference>
<dbReference type="EMBL" id="CH471062">
    <property type="protein sequence ID" value="EAW62124.1"/>
    <property type="molecule type" value="Genomic_DNA"/>
</dbReference>
<dbReference type="EMBL" id="BC000385">
    <property type="protein sequence ID" value="AAH00385.1"/>
    <property type="molecule type" value="mRNA"/>
</dbReference>
<dbReference type="EMBL" id="BC031262">
    <property type="protein sequence ID" value="AAH31262.1"/>
    <property type="molecule type" value="mRNA"/>
</dbReference>
<dbReference type="EMBL" id="L22080">
    <property type="protein sequence ID" value="AAA35502.1"/>
    <property type="molecule type" value="mRNA"/>
</dbReference>
<dbReference type="CCDS" id="CCDS34243.1">
    <molecule id="P35221-1"/>
</dbReference>
<dbReference type="CCDS" id="CCDS75315.1">
    <molecule id="P35221-3"/>
</dbReference>
<dbReference type="PIR" id="JC2542">
    <property type="entry name" value="JC2542"/>
</dbReference>
<dbReference type="PIR" id="JN0607">
    <property type="entry name" value="JN0607"/>
</dbReference>
<dbReference type="RefSeq" id="NP_001277236.1">
    <property type="nucleotide sequence ID" value="NM_001290307.2"/>
</dbReference>
<dbReference type="RefSeq" id="NP_001277238.1">
    <property type="nucleotide sequence ID" value="NM_001290309.2"/>
</dbReference>
<dbReference type="RefSeq" id="NP_001277239.1">
    <property type="nucleotide sequence ID" value="NM_001290310.2"/>
</dbReference>
<dbReference type="RefSeq" id="NP_001277241.1">
    <molecule id="P35221-3"/>
    <property type="nucleotide sequence ID" value="NM_001290312.1"/>
</dbReference>
<dbReference type="RefSeq" id="NP_001310911.1">
    <molecule id="P35221-1"/>
    <property type="nucleotide sequence ID" value="NM_001323982.2"/>
</dbReference>
<dbReference type="RefSeq" id="NP_001310912.1">
    <molecule id="P35221-1"/>
    <property type="nucleotide sequence ID" value="NM_001323983.1"/>
</dbReference>
<dbReference type="RefSeq" id="NP_001310913.1">
    <molecule id="P35221-1"/>
    <property type="nucleotide sequence ID" value="NM_001323984.2"/>
</dbReference>
<dbReference type="RefSeq" id="NP_001310916.1">
    <molecule id="P35221-3"/>
    <property type="nucleotide sequence ID" value="NM_001323987.1"/>
</dbReference>
<dbReference type="RefSeq" id="NP_001310917.1">
    <molecule id="P35221-3"/>
    <property type="nucleotide sequence ID" value="NM_001323988.1"/>
</dbReference>
<dbReference type="RefSeq" id="NP_001310918.1">
    <molecule id="P35221-3"/>
    <property type="nucleotide sequence ID" value="NM_001323989.1"/>
</dbReference>
<dbReference type="RefSeq" id="NP_001310919.1">
    <molecule id="P35221-3"/>
    <property type="nucleotide sequence ID" value="NM_001323990.1"/>
</dbReference>
<dbReference type="RefSeq" id="NP_001310920.1">
    <molecule id="P35221-3"/>
    <property type="nucleotide sequence ID" value="NM_001323991.1"/>
</dbReference>
<dbReference type="RefSeq" id="NP_001310921.1">
    <molecule id="P35221-3"/>
    <property type="nucleotide sequence ID" value="NM_001323992.1"/>
</dbReference>
<dbReference type="RefSeq" id="NP_001310922.1">
    <molecule id="P35221-3"/>
    <property type="nucleotide sequence ID" value="NM_001323993.1"/>
</dbReference>
<dbReference type="RefSeq" id="NP_001310923.1">
    <molecule id="P35221-3"/>
    <property type="nucleotide sequence ID" value="NM_001323994.1"/>
</dbReference>
<dbReference type="RefSeq" id="NP_001310924.1">
    <molecule id="P35221-3"/>
    <property type="nucleotide sequence ID" value="NM_001323995.1"/>
</dbReference>
<dbReference type="RefSeq" id="NP_001310925.1">
    <molecule id="P35221-3"/>
    <property type="nucleotide sequence ID" value="NM_001323996.1"/>
</dbReference>
<dbReference type="RefSeq" id="NP_001310926.1">
    <molecule id="P35221-3"/>
    <property type="nucleotide sequence ID" value="NM_001323997.1"/>
</dbReference>
<dbReference type="RefSeq" id="NP_001310927.1">
    <molecule id="P35221-3"/>
    <property type="nucleotide sequence ID" value="NM_001323998.1"/>
</dbReference>
<dbReference type="RefSeq" id="NP_001310928.1">
    <molecule id="P35221-3"/>
    <property type="nucleotide sequence ID" value="NM_001323999.1"/>
</dbReference>
<dbReference type="RefSeq" id="NP_001310929.1">
    <molecule id="P35221-3"/>
    <property type="nucleotide sequence ID" value="NM_001324000.1"/>
</dbReference>
<dbReference type="RefSeq" id="NP_001894.2">
    <molecule id="P35221-1"/>
    <property type="nucleotide sequence ID" value="NM_001903.5"/>
</dbReference>
<dbReference type="RefSeq" id="XP_054207693.1">
    <molecule id="P35221-3"/>
    <property type="nucleotide sequence ID" value="XM_054351718.1"/>
</dbReference>
<dbReference type="PDB" id="1H6G">
    <property type="method" value="X-ray"/>
    <property type="resolution" value="2.20 A"/>
    <property type="chains" value="A/B=377-632"/>
</dbReference>
<dbReference type="PDB" id="4EHP">
    <property type="method" value="X-ray"/>
    <property type="resolution" value="2.66 A"/>
    <property type="chains" value="B=277-382"/>
</dbReference>
<dbReference type="PDB" id="4IGG">
    <property type="method" value="X-ray"/>
    <property type="resolution" value="3.66 A"/>
    <property type="chains" value="A/B=82-906"/>
</dbReference>
<dbReference type="PDB" id="6UPV">
    <property type="method" value="EM"/>
    <property type="resolution" value="3.20 A"/>
    <property type="chains" value="L/M=1-906"/>
</dbReference>
<dbReference type="PDB" id="6V2O">
    <property type="method" value="X-ray"/>
    <property type="resolution" value="1.27 A"/>
    <property type="chains" value="C=850-859"/>
</dbReference>
<dbReference type="PDB" id="6V2P">
    <property type="method" value="X-ray"/>
    <property type="resolution" value="1.30 A"/>
    <property type="chains" value="C=850-859"/>
</dbReference>
<dbReference type="PDB" id="7UTJ">
    <property type="method" value="EM"/>
    <property type="resolution" value="2.77 A"/>
    <property type="chains" value="G/H/I/K/L/Z=22-906"/>
</dbReference>
<dbReference type="PDB" id="9BL2">
    <property type="method" value="X-ray"/>
    <property type="resolution" value="2.10 A"/>
    <property type="chains" value="C=850-859"/>
</dbReference>
<dbReference type="PDB" id="9BL3">
    <property type="method" value="X-ray"/>
    <property type="resolution" value="2.00 A"/>
    <property type="chains" value="C=850-859"/>
</dbReference>
<dbReference type="PDB" id="9BL4">
    <property type="method" value="X-ray"/>
    <property type="resolution" value="1.75 A"/>
    <property type="chains" value="C=850-859"/>
</dbReference>
<dbReference type="PDBsum" id="1H6G"/>
<dbReference type="PDBsum" id="4EHP"/>
<dbReference type="PDBsum" id="4IGG"/>
<dbReference type="PDBsum" id="6UPV"/>
<dbReference type="PDBsum" id="6V2O"/>
<dbReference type="PDBsum" id="6V2P"/>
<dbReference type="PDBsum" id="7UTJ"/>
<dbReference type="PDBsum" id="9BL2"/>
<dbReference type="PDBsum" id="9BL3"/>
<dbReference type="PDBsum" id="9BL4"/>
<dbReference type="EMDB" id="EMD-20843"/>
<dbReference type="EMDB" id="EMD-26772"/>
<dbReference type="SMR" id="P35221"/>
<dbReference type="BioGRID" id="107876">
    <property type="interactions" value="361"/>
</dbReference>
<dbReference type="CORUM" id="P35221"/>
<dbReference type="DIP" id="DIP-515N"/>
<dbReference type="FunCoup" id="P35221">
    <property type="interactions" value="1991"/>
</dbReference>
<dbReference type="IntAct" id="P35221">
    <property type="interactions" value="133"/>
</dbReference>
<dbReference type="MINT" id="P35221"/>
<dbReference type="STRING" id="9606.ENSP00000304669"/>
<dbReference type="ChEMBL" id="CHEMBL4295748"/>
<dbReference type="GlyGen" id="P35221">
    <property type="glycosylation" value="2 sites, 1 N-linked glycan (1 site), 1 O-linked glycan (1 site)"/>
</dbReference>
<dbReference type="iPTMnet" id="P35221"/>
<dbReference type="MetOSite" id="P35221"/>
<dbReference type="PhosphoSitePlus" id="P35221"/>
<dbReference type="SwissPalm" id="P35221"/>
<dbReference type="BioMuta" id="CTNNA1"/>
<dbReference type="DMDM" id="461853"/>
<dbReference type="CPTAC" id="CPTAC-1750"/>
<dbReference type="jPOST" id="P35221"/>
<dbReference type="MassIVE" id="P35221"/>
<dbReference type="PaxDb" id="9606-ENSP00000304669"/>
<dbReference type="PeptideAtlas" id="P35221"/>
<dbReference type="ProteomicsDB" id="54986">
    <molecule id="P35221-1"/>
</dbReference>
<dbReference type="ProteomicsDB" id="54987">
    <molecule id="P35221-2"/>
</dbReference>
<dbReference type="ProteomicsDB" id="71584"/>
<dbReference type="Pumba" id="P35221"/>
<dbReference type="Antibodypedia" id="3431">
    <property type="antibodies" value="783 antibodies from 44 providers"/>
</dbReference>
<dbReference type="DNASU" id="1495"/>
<dbReference type="Ensembl" id="ENST00000302763.12">
    <molecule id="P35221-1"/>
    <property type="protein sequence ID" value="ENSP00000304669.7"/>
    <property type="gene ID" value="ENSG00000044115.21"/>
</dbReference>
<dbReference type="Ensembl" id="ENST00000540387.5">
    <molecule id="P35221-3"/>
    <property type="protein sequence ID" value="ENSP00000438476.1"/>
    <property type="gene ID" value="ENSG00000044115.21"/>
</dbReference>
<dbReference type="GeneID" id="1495"/>
<dbReference type="KEGG" id="hsa:1495"/>
<dbReference type="MANE-Select" id="ENST00000302763.12">
    <property type="protein sequence ID" value="ENSP00000304669.7"/>
    <property type="RefSeq nucleotide sequence ID" value="NM_001903.5"/>
    <property type="RefSeq protein sequence ID" value="NP_001894.2"/>
</dbReference>
<dbReference type="UCSC" id="uc003ldh.4">
    <molecule id="P35221-1"/>
    <property type="organism name" value="human"/>
</dbReference>
<dbReference type="AGR" id="HGNC:2509"/>
<dbReference type="CTD" id="1495"/>
<dbReference type="DisGeNET" id="1495"/>
<dbReference type="GeneCards" id="CTNNA1"/>
<dbReference type="GeneReviews" id="CTNNA1"/>
<dbReference type="HGNC" id="HGNC:2509">
    <property type="gene designation" value="CTNNA1"/>
</dbReference>
<dbReference type="HPA" id="ENSG00000044115">
    <property type="expression patterns" value="Low tissue specificity"/>
</dbReference>
<dbReference type="MalaCards" id="CTNNA1"/>
<dbReference type="MIM" id="116805">
    <property type="type" value="gene"/>
</dbReference>
<dbReference type="MIM" id="608970">
    <property type="type" value="phenotype"/>
</dbReference>
<dbReference type="neXtProt" id="NX_P35221"/>
<dbReference type="OpenTargets" id="ENSG00000044115"/>
<dbReference type="Orphanet" id="99001">
    <property type="disease" value="Butterfly-shaped pigment dystrophy"/>
</dbReference>
<dbReference type="Orphanet" id="26106">
    <property type="disease" value="Hereditary diffuse gastric cancer"/>
</dbReference>
<dbReference type="PharmGKB" id="PA27008"/>
<dbReference type="VEuPathDB" id="HostDB:ENSG00000044115"/>
<dbReference type="eggNOG" id="KOG3681">
    <property type="taxonomic scope" value="Eukaryota"/>
</dbReference>
<dbReference type="GeneTree" id="ENSGT01030000234543"/>
<dbReference type="HOGENOM" id="CLU_015314_2_0_1"/>
<dbReference type="InParanoid" id="P35221"/>
<dbReference type="OMA" id="QENMDMF"/>
<dbReference type="OrthoDB" id="6376697at2759"/>
<dbReference type="PAN-GO" id="P35221">
    <property type="GO annotations" value="6 GO annotations based on evolutionary models"/>
</dbReference>
<dbReference type="PhylomeDB" id="P35221"/>
<dbReference type="TreeFam" id="TF313686"/>
<dbReference type="PathwayCommons" id="P35221"/>
<dbReference type="Reactome" id="R-HSA-418990">
    <property type="pathway name" value="Adherens junctions interactions"/>
</dbReference>
<dbReference type="Reactome" id="R-HSA-5218920">
    <property type="pathway name" value="VEGFR2 mediated vascular permeability"/>
</dbReference>
<dbReference type="Reactome" id="R-HSA-525793">
    <property type="pathway name" value="Myogenesis"/>
</dbReference>
<dbReference type="Reactome" id="R-HSA-5626467">
    <property type="pathway name" value="RHO GTPases activate IQGAPs"/>
</dbReference>
<dbReference type="Reactome" id="R-HSA-9762292">
    <property type="pathway name" value="Regulation of CDH11 function"/>
</dbReference>
<dbReference type="Reactome" id="R-HSA-9764302">
    <property type="pathway name" value="Regulation of CDH19 Expression and Function"/>
</dbReference>
<dbReference type="Reactome" id="R-HSA-9833576">
    <property type="pathway name" value="CDH11 homotypic and heterotypic interactions"/>
</dbReference>
<dbReference type="SignaLink" id="P35221"/>
<dbReference type="SIGNOR" id="P35221"/>
<dbReference type="BioGRID-ORCS" id="1495">
    <property type="hits" value="38 hits in 1168 CRISPR screens"/>
</dbReference>
<dbReference type="CD-CODE" id="FB4E32DD">
    <property type="entry name" value="Presynaptic clusters and postsynaptic densities"/>
</dbReference>
<dbReference type="ChiTaRS" id="CTNNA1">
    <property type="organism name" value="human"/>
</dbReference>
<dbReference type="EvolutionaryTrace" id="P35221"/>
<dbReference type="GeneWiki" id="Catenin_(cadherin-associated_protein),_alpha_1"/>
<dbReference type="GenomeRNAi" id="1495"/>
<dbReference type="Pharos" id="P35221">
    <property type="development level" value="Tbio"/>
</dbReference>
<dbReference type="PRO" id="PR:P35221"/>
<dbReference type="Proteomes" id="UP000005640">
    <property type="component" value="Chromosome 5"/>
</dbReference>
<dbReference type="RNAct" id="P35221">
    <property type="molecule type" value="protein"/>
</dbReference>
<dbReference type="Bgee" id="ENSG00000044115">
    <property type="expression patterns" value="Expressed in colonic epithelium and 210 other cell types or tissues"/>
</dbReference>
<dbReference type="ExpressionAtlas" id="P35221">
    <property type="expression patterns" value="baseline and differential"/>
</dbReference>
<dbReference type="GO" id="GO:0001669">
    <property type="term" value="C:acrosomal vesicle"/>
    <property type="evidence" value="ECO:0007669"/>
    <property type="project" value="Ensembl"/>
</dbReference>
<dbReference type="GO" id="GO:0015629">
    <property type="term" value="C:actin cytoskeleton"/>
    <property type="evidence" value="ECO:0007669"/>
    <property type="project" value="InterPro"/>
</dbReference>
<dbReference type="GO" id="GO:0005912">
    <property type="term" value="C:adherens junction"/>
    <property type="evidence" value="ECO:0000318"/>
    <property type="project" value="GO_Central"/>
</dbReference>
<dbReference type="GO" id="GO:0016342">
    <property type="term" value="C:catenin complex"/>
    <property type="evidence" value="ECO:0000314"/>
    <property type="project" value="UniProtKB"/>
</dbReference>
<dbReference type="GO" id="GO:0030054">
    <property type="term" value="C:cell junction"/>
    <property type="evidence" value="ECO:0000314"/>
    <property type="project" value="HPA"/>
</dbReference>
<dbReference type="GO" id="GO:0005911">
    <property type="term" value="C:cell-cell junction"/>
    <property type="evidence" value="ECO:0000314"/>
    <property type="project" value="UniProtKB"/>
</dbReference>
<dbReference type="GO" id="GO:0005829">
    <property type="term" value="C:cytosol"/>
    <property type="evidence" value="ECO:0000304"/>
    <property type="project" value="Reactome"/>
</dbReference>
<dbReference type="GO" id="GO:0016600">
    <property type="term" value="C:flotillin complex"/>
    <property type="evidence" value="ECO:0007669"/>
    <property type="project" value="Ensembl"/>
</dbReference>
<dbReference type="GO" id="GO:0005925">
    <property type="term" value="C:focal adhesion"/>
    <property type="evidence" value="ECO:0007005"/>
    <property type="project" value="UniProtKB"/>
</dbReference>
<dbReference type="GO" id="GO:0005794">
    <property type="term" value="C:Golgi apparatus"/>
    <property type="evidence" value="ECO:0000314"/>
    <property type="project" value="HPA"/>
</dbReference>
<dbReference type="GO" id="GO:0014704">
    <property type="term" value="C:intercalated disc"/>
    <property type="evidence" value="ECO:0007669"/>
    <property type="project" value="Ensembl"/>
</dbReference>
<dbReference type="GO" id="GO:0043231">
    <property type="term" value="C:intracellular membrane-bounded organelle"/>
    <property type="evidence" value="ECO:0000314"/>
    <property type="project" value="HPA"/>
</dbReference>
<dbReference type="GO" id="GO:0030027">
    <property type="term" value="C:lamellipodium"/>
    <property type="evidence" value="ECO:0007669"/>
    <property type="project" value="Ensembl"/>
</dbReference>
<dbReference type="GO" id="GO:0005634">
    <property type="term" value="C:nucleus"/>
    <property type="evidence" value="ECO:0007669"/>
    <property type="project" value="UniProtKB-SubCell"/>
</dbReference>
<dbReference type="GO" id="GO:0005886">
    <property type="term" value="C:plasma membrane"/>
    <property type="evidence" value="ECO:0000314"/>
    <property type="project" value="HPA"/>
</dbReference>
<dbReference type="GO" id="GO:0005915">
    <property type="term" value="C:zonula adherens"/>
    <property type="evidence" value="ECO:0007669"/>
    <property type="project" value="Ensembl"/>
</dbReference>
<dbReference type="GO" id="GO:0051015">
    <property type="term" value="F:actin filament binding"/>
    <property type="evidence" value="ECO:0000318"/>
    <property type="project" value="GO_Central"/>
</dbReference>
<dbReference type="GO" id="GO:0008013">
    <property type="term" value="F:beta-catenin binding"/>
    <property type="evidence" value="ECO:0000353"/>
    <property type="project" value="BHF-UCL"/>
</dbReference>
<dbReference type="GO" id="GO:0045296">
    <property type="term" value="F:cadherin binding"/>
    <property type="evidence" value="ECO:0000353"/>
    <property type="project" value="UniProtKB"/>
</dbReference>
<dbReference type="GO" id="GO:0045295">
    <property type="term" value="F:gamma-catenin binding"/>
    <property type="evidence" value="ECO:0000353"/>
    <property type="project" value="BHF-UCL"/>
</dbReference>
<dbReference type="GO" id="GO:0042802">
    <property type="term" value="F:identical protein binding"/>
    <property type="evidence" value="ECO:0000353"/>
    <property type="project" value="IntAct"/>
</dbReference>
<dbReference type="GO" id="GO:0003723">
    <property type="term" value="F:RNA binding"/>
    <property type="evidence" value="ECO:0007005"/>
    <property type="project" value="UniProtKB"/>
</dbReference>
<dbReference type="GO" id="GO:0005198">
    <property type="term" value="F:structural molecule activity"/>
    <property type="evidence" value="ECO:0007669"/>
    <property type="project" value="InterPro"/>
</dbReference>
<dbReference type="GO" id="GO:0017166">
    <property type="term" value="F:vinculin binding"/>
    <property type="evidence" value="ECO:0000353"/>
    <property type="project" value="UniProtKB"/>
</dbReference>
<dbReference type="GO" id="GO:0043297">
    <property type="term" value="P:apical junction assembly"/>
    <property type="evidence" value="ECO:0000303"/>
    <property type="project" value="UniProtKB"/>
</dbReference>
<dbReference type="GO" id="GO:0031103">
    <property type="term" value="P:axon regeneration"/>
    <property type="evidence" value="ECO:0007669"/>
    <property type="project" value="Ensembl"/>
</dbReference>
<dbReference type="GO" id="GO:0007155">
    <property type="term" value="P:cell adhesion"/>
    <property type="evidence" value="ECO:0000303"/>
    <property type="project" value="ProtInc"/>
</dbReference>
<dbReference type="GO" id="GO:0016477">
    <property type="term" value="P:cell migration"/>
    <property type="evidence" value="ECO:0000318"/>
    <property type="project" value="GO_Central"/>
</dbReference>
<dbReference type="GO" id="GO:0098609">
    <property type="term" value="P:cell-cell adhesion"/>
    <property type="evidence" value="ECO:0000318"/>
    <property type="project" value="GO_Central"/>
</dbReference>
<dbReference type="GO" id="GO:0071681">
    <property type="term" value="P:cellular response to indole-3-methanol"/>
    <property type="evidence" value="ECO:0000314"/>
    <property type="project" value="UniProtKB"/>
</dbReference>
<dbReference type="GO" id="GO:0090136">
    <property type="term" value="P:epithelial cell-cell adhesion"/>
    <property type="evidence" value="ECO:0007669"/>
    <property type="project" value="Ensembl"/>
</dbReference>
<dbReference type="GO" id="GO:0007163">
    <property type="term" value="P:establishment or maintenance of cell polarity"/>
    <property type="evidence" value="ECO:0007669"/>
    <property type="project" value="Ensembl"/>
</dbReference>
<dbReference type="GO" id="GO:0097192">
    <property type="term" value="P:extrinsic apoptotic signaling pathway in absence of ligand"/>
    <property type="evidence" value="ECO:0007669"/>
    <property type="project" value="Ensembl"/>
</dbReference>
<dbReference type="GO" id="GO:0016264">
    <property type="term" value="P:gap junction assembly"/>
    <property type="evidence" value="ECO:0007669"/>
    <property type="project" value="Ensembl"/>
</dbReference>
<dbReference type="GO" id="GO:0007229">
    <property type="term" value="P:integrin-mediated signaling pathway"/>
    <property type="evidence" value="ECO:0007669"/>
    <property type="project" value="Ensembl"/>
</dbReference>
<dbReference type="GO" id="GO:0008584">
    <property type="term" value="P:male gonad development"/>
    <property type="evidence" value="ECO:0007669"/>
    <property type="project" value="Ensembl"/>
</dbReference>
<dbReference type="GO" id="GO:2000146">
    <property type="term" value="P:negative regulation of cell motility"/>
    <property type="evidence" value="ECO:0007669"/>
    <property type="project" value="Ensembl"/>
</dbReference>
<dbReference type="GO" id="GO:2001240">
    <property type="term" value="P:negative regulation of extrinsic apoptotic signaling pathway in absence of ligand"/>
    <property type="evidence" value="ECO:0007669"/>
    <property type="project" value="Ensembl"/>
</dbReference>
<dbReference type="GO" id="GO:2001045">
    <property type="term" value="P:negative regulation of integrin-mediated signaling pathway"/>
    <property type="evidence" value="ECO:0007669"/>
    <property type="project" value="Ensembl"/>
</dbReference>
<dbReference type="GO" id="GO:0007406">
    <property type="term" value="P:negative regulation of neuroblast proliferation"/>
    <property type="evidence" value="ECO:0007669"/>
    <property type="project" value="Ensembl"/>
</dbReference>
<dbReference type="GO" id="GO:1900181">
    <property type="term" value="P:negative regulation of protein localization to nucleus"/>
    <property type="evidence" value="ECO:0000250"/>
    <property type="project" value="UniProtKB"/>
</dbReference>
<dbReference type="GO" id="GO:0007405">
    <property type="term" value="P:neuroblast proliferation"/>
    <property type="evidence" value="ECO:0007669"/>
    <property type="project" value="Ensembl"/>
</dbReference>
<dbReference type="GO" id="GO:0042475">
    <property type="term" value="P:odontogenesis of dentin-containing tooth"/>
    <property type="evidence" value="ECO:0007669"/>
    <property type="project" value="Ensembl"/>
</dbReference>
<dbReference type="GO" id="GO:0001541">
    <property type="term" value="P:ovarian follicle development"/>
    <property type="evidence" value="ECO:0007669"/>
    <property type="project" value="Ensembl"/>
</dbReference>
<dbReference type="GO" id="GO:2001241">
    <property type="term" value="P:positive regulation of extrinsic apoptotic signaling pathway in absence of ligand"/>
    <property type="evidence" value="ECO:0007669"/>
    <property type="project" value="Ensembl"/>
</dbReference>
<dbReference type="GO" id="GO:0045880">
    <property type="term" value="P:positive regulation of smoothened signaling pathway"/>
    <property type="evidence" value="ECO:0007669"/>
    <property type="project" value="Ensembl"/>
</dbReference>
<dbReference type="GO" id="GO:0008104">
    <property type="term" value="P:protein localization"/>
    <property type="evidence" value="ECO:0007669"/>
    <property type="project" value="Ensembl"/>
</dbReference>
<dbReference type="GO" id="GO:0043627">
    <property type="term" value="P:response to estrogen"/>
    <property type="evidence" value="ECO:0007669"/>
    <property type="project" value="Ensembl"/>
</dbReference>
<dbReference type="GO" id="GO:0007224">
    <property type="term" value="P:smoothened signaling pathway"/>
    <property type="evidence" value="ECO:0007669"/>
    <property type="project" value="Ensembl"/>
</dbReference>
<dbReference type="FunFam" id="1.20.120.230:FF:000006">
    <property type="entry name" value="Catenin alpha 1"/>
    <property type="match status" value="1"/>
</dbReference>
<dbReference type="FunFam" id="1.20.120.230:FF:000007">
    <property type="entry name" value="Catenin alpha 1"/>
    <property type="match status" value="1"/>
</dbReference>
<dbReference type="FunFam" id="1.20.120.230:FF:000008">
    <property type="entry name" value="Catenin alpha 1"/>
    <property type="match status" value="1"/>
</dbReference>
<dbReference type="FunFam" id="1.20.120.230:FF:000011">
    <property type="entry name" value="Catenin alpha 1"/>
    <property type="match status" value="1"/>
</dbReference>
<dbReference type="FunFam" id="1.20.120.230:FF:000012">
    <property type="entry name" value="Catenin alpha-2 isoform 1"/>
    <property type="match status" value="1"/>
</dbReference>
<dbReference type="Gene3D" id="6.10.250.2510">
    <property type="match status" value="1"/>
</dbReference>
<dbReference type="Gene3D" id="1.20.120.230">
    <property type="entry name" value="Alpha-catenin/vinculin-like"/>
    <property type="match status" value="5"/>
</dbReference>
<dbReference type="InterPro" id="IPR036723">
    <property type="entry name" value="Alpha-catenin/vinculin-like_sf"/>
</dbReference>
<dbReference type="InterPro" id="IPR001033">
    <property type="entry name" value="Alpha_catenin"/>
</dbReference>
<dbReference type="InterPro" id="IPR006077">
    <property type="entry name" value="Vinculin/catenin"/>
</dbReference>
<dbReference type="InterPro" id="IPR000633">
    <property type="entry name" value="Vinculin_CS"/>
</dbReference>
<dbReference type="PANTHER" id="PTHR18914">
    <property type="entry name" value="ALPHA CATENIN"/>
    <property type="match status" value="1"/>
</dbReference>
<dbReference type="PANTHER" id="PTHR18914:SF24">
    <property type="entry name" value="CATENIN ALPHA-1"/>
    <property type="match status" value="1"/>
</dbReference>
<dbReference type="Pfam" id="PF01044">
    <property type="entry name" value="Vinculin"/>
    <property type="match status" value="1"/>
</dbReference>
<dbReference type="PRINTS" id="PR00805">
    <property type="entry name" value="ALPHACATENIN"/>
</dbReference>
<dbReference type="SUPFAM" id="SSF47220">
    <property type="entry name" value="alpha-catenin/vinculin-like"/>
    <property type="match status" value="4"/>
</dbReference>
<dbReference type="PROSITE" id="PS00663">
    <property type="entry name" value="VINCULIN_1"/>
    <property type="match status" value="1"/>
</dbReference>
<feature type="initiator methionine" description="Removed" evidence="15">
    <location>
        <position position="1"/>
    </location>
</feature>
<feature type="chain" id="PRO_0000064261" description="Catenin alpha-1">
    <location>
        <begin position="2"/>
        <end position="906"/>
    </location>
</feature>
<feature type="region of interest" description="Involved in homodimerization">
    <location>
        <begin position="2"/>
        <end position="228"/>
    </location>
</feature>
<feature type="region of interest" description="Interaction with JUP and CTNNB1" evidence="14">
    <location>
        <begin position="97"/>
        <end position="148"/>
    </location>
</feature>
<feature type="region of interest" description="Interaction with alpha-actinin">
    <location>
        <begin position="325"/>
        <end position="394"/>
    </location>
</feature>
<feature type="region of interest" description="Disordered" evidence="3">
    <location>
        <begin position="864"/>
        <end position="894"/>
    </location>
</feature>
<feature type="compositionally biased region" description="Basic and acidic residues" evidence="3">
    <location>
        <begin position="864"/>
        <end position="880"/>
    </location>
</feature>
<feature type="compositionally biased region" description="Basic residues" evidence="3">
    <location>
        <begin position="881"/>
        <end position="891"/>
    </location>
</feature>
<feature type="modified residue" description="N-acetylthreonine" evidence="15">
    <location>
        <position position="2"/>
    </location>
</feature>
<feature type="modified residue" description="Phosphoserine" evidence="34">
    <location>
        <position position="264"/>
    </location>
</feature>
<feature type="modified residue" description="Phosphoserine" evidence="34">
    <location>
        <position position="268"/>
    </location>
</feature>
<feature type="modified residue" description="Phosphoserine" evidence="34">
    <location>
        <position position="295"/>
    </location>
</feature>
<feature type="modified residue" description="Phosphoserine" evidence="34">
    <location>
        <position position="297"/>
    </location>
</feature>
<feature type="modified residue" description="Phosphothreonine" evidence="32 34">
    <location>
        <position position="634"/>
    </location>
</feature>
<feature type="modified residue" description="Phosphoserine; by CK2" evidence="10 23 24 26 27 28 29 30 31 32 33 34">
    <location>
        <position position="641"/>
    </location>
</feature>
<feature type="modified residue" description="Phosphothreonine" evidence="27">
    <location>
        <position position="645"/>
    </location>
</feature>
<feature type="modified residue" description="Phosphoserine; by CK1" evidence="10 25 28 32">
    <location>
        <position position="652"/>
    </location>
</feature>
<feature type="modified residue" description="Phosphoserine; by CK1" evidence="10">
    <location>
        <position position="655"/>
    </location>
</feature>
<feature type="modified residue" description="Phosphothreonine; by CK1" evidence="10">
    <location>
        <position position="658"/>
    </location>
</feature>
<feature type="modified residue" description="Phosphoserine" evidence="34">
    <location>
        <position position="851"/>
    </location>
</feature>
<feature type="cross-link" description="Glycyl lysine isopeptide (Lys-Gly) (interchain with G-Cter in SUMO2)" evidence="35">
    <location>
        <position position="57"/>
    </location>
</feature>
<feature type="cross-link" description="Glycyl lysine isopeptide (Lys-Gly) (interchain with G-Cter in SUMO2)" evidence="35">
    <location>
        <position position="797"/>
    </location>
</feature>
<feature type="splice variant" id="VSP_047810" description="In isoform 3." evidence="18 19">
    <location>
        <begin position="1"/>
        <end position="370"/>
    </location>
</feature>
<feature type="splice variant" id="VSP_017494" description="In isoform 2." evidence="20">
    <original>G</original>
    <variation>GNCDTCGALQGLKGWPPPLCLATHW</variation>
    <location>
        <position position="811"/>
    </location>
</feature>
<feature type="sequence variant" id="VAR_076586" description="In MDPT2; no effect on VCL-binding; dbSNP:rs781520852." evidence="12">
    <original>R</original>
    <variation>C</variation>
    <location>
        <position position="54"/>
    </location>
</feature>
<feature type="sequence variant" id="VAR_022303" description="In dbSNP:rs28363394." evidence="16">
    <original>A</original>
    <variation>V</variation>
    <location>
        <position position="179"/>
    </location>
</feature>
<feature type="sequence variant" id="VAR_022304" description="In dbSNP:rs28363406." evidence="16">
    <original>P</original>
    <variation>S</variation>
    <location>
        <position position="219"/>
    </location>
</feature>
<feature type="sequence variant" id="VAR_076587" description="In MDPT2; no effect on VCL-binding; dbSNP:rs869320697." evidence="12">
    <original>E</original>
    <variation>K</variation>
    <location>
        <position position="307"/>
    </location>
</feature>
<feature type="sequence variant" id="VAR_076588" description="In MDPT2; no effect on VCL-binding; dbSNP:rs869320696." evidence="12">
    <original>L</original>
    <variation>S</variation>
    <location>
        <position position="318"/>
    </location>
</feature>
<feature type="sequence variant" id="VAR_076589" description="In MDPT2; no effect on VCL-binding; dbSNP:rs755215402." evidence="12">
    <original>I</original>
    <variation>M</variation>
    <location>
        <position position="431"/>
    </location>
</feature>
<feature type="mutagenesis site" description="Abolishes phosphorylation by CK2. No effect on phosphorylation by CK1." evidence="10">
    <original>S</original>
    <variation>A</variation>
    <location>
        <position position="641"/>
    </location>
</feature>
<feature type="mutagenesis site" description="Enhances phosphorylation by CK1." evidence="10">
    <original>S</original>
    <variation>D</variation>
    <location>
        <position position="641"/>
    </location>
</feature>
<feature type="mutagenesis site" description="Abolishes phosphorylation by CK1. No effect on phosphorylation by CK2." evidence="10">
    <original>SRTSVQT</original>
    <variation>ARTAVQA</variation>
    <location>
        <begin position="652"/>
        <end position="658"/>
    </location>
</feature>
<feature type="mutagenesis site" description="Abolishes phosphorylation by CK1." evidence="10">
    <original>S</original>
    <variation>A</variation>
    <location>
        <position position="652"/>
    </location>
</feature>
<feature type="sequence conflict" description="In Ref. 3; AAA86430/AAA18949." evidence="21" ref="3">
    <original>A</original>
    <variation>V</variation>
    <location>
        <position position="92"/>
    </location>
</feature>
<feature type="sequence conflict" description="In Ref. 3; AAA18949." evidence="21" ref="3">
    <original>R</original>
    <variation>P</variation>
    <location>
        <position position="129"/>
    </location>
</feature>
<feature type="sequence conflict" description="In Ref. 3; AAA86430/AAA18949." evidence="21" ref="3">
    <original>I</original>
    <variation>N</variation>
    <location>
        <position position="175"/>
    </location>
</feature>
<feature type="sequence conflict" description="In Ref. 3; AAA86430/AAA18949." evidence="21" ref="3">
    <original>K</original>
    <variation>S</variation>
    <location>
        <position position="216"/>
    </location>
</feature>
<feature type="sequence conflict" description="In Ref. 1; BAA03530." evidence="21" ref="1">
    <original>Q</original>
    <variation>K</variation>
    <location>
        <position position="342"/>
    </location>
</feature>
<feature type="sequence conflict" description="In Ref. 3; AAA86430." evidence="21" ref="3">
    <original>LQDLL</original>
    <variation>CRTCV</variation>
    <location>
        <begin position="344"/>
        <end position="348"/>
    </location>
</feature>
<feature type="sequence conflict" description="In Ref. 3; AAA86430/AAA18949." evidence="21" ref="3">
    <original>L</original>
    <variation>G</variation>
    <location>
        <position position="460"/>
    </location>
</feature>
<feature type="sequence conflict" description="In Ref. 3; AAA86430/AAA18949." evidence="21" ref="3">
    <original>L</original>
    <variation>TW</variation>
    <location>
        <position position="469"/>
    </location>
</feature>
<feature type="sequence conflict" description="In Ref. 3; AAA86430/AAA18949." evidence="21" ref="3">
    <original>A</original>
    <variation>P</variation>
    <location>
        <position position="473"/>
    </location>
</feature>
<feature type="sequence conflict" description="In Ref. 3; AAA86430/AAA18949." evidence="21" ref="3">
    <original>R</original>
    <variation>E</variation>
    <location>
        <position position="653"/>
    </location>
</feature>
<feature type="sequence conflict" description="In Ref. 3; AAA86430/AAA18949." evidence="21" ref="3">
    <original>A</original>
    <variation>R</variation>
    <location>
        <position position="685"/>
    </location>
</feature>
<feature type="sequence conflict" description="In Ref. 3; AAA86430/AAA18949." evidence="21" ref="3">
    <original>A</original>
    <variation>R</variation>
    <location>
        <position position="764"/>
    </location>
</feature>
<feature type="sequence conflict" description="In Ref. 1; BAA03530." evidence="21" ref="1">
    <original>Q</original>
    <variation>H</variation>
    <location>
        <position position="789"/>
    </location>
</feature>
<feature type="sequence conflict" description="In Ref. 3; AAA86430/AAA18949." evidence="21" ref="3">
    <original>W</original>
    <variation>M</variation>
    <location>
        <position position="859"/>
    </location>
</feature>
<feature type="helix" evidence="37">
    <location>
        <begin position="293"/>
        <end position="299"/>
    </location>
</feature>
<feature type="strand" evidence="37">
    <location>
        <begin position="300"/>
        <end position="302"/>
    </location>
</feature>
<feature type="helix" evidence="37">
    <location>
        <begin position="305"/>
        <end position="316"/>
    </location>
</feature>
<feature type="helix" evidence="37">
    <location>
        <begin position="325"/>
        <end position="327"/>
    </location>
</feature>
<feature type="helix" evidence="37">
    <location>
        <begin position="328"/>
        <end position="352"/>
    </location>
</feature>
<feature type="helix" evidence="37">
    <location>
        <begin position="353"/>
        <end position="355"/>
    </location>
</feature>
<feature type="helix" evidence="36">
    <location>
        <begin position="378"/>
        <end position="386"/>
    </location>
</feature>
<feature type="helix" evidence="36">
    <location>
        <begin position="387"/>
        <end position="389"/>
    </location>
</feature>
<feature type="turn" evidence="36">
    <location>
        <begin position="393"/>
        <end position="395"/>
    </location>
</feature>
<feature type="helix" evidence="36">
    <location>
        <begin position="398"/>
        <end position="409"/>
    </location>
</feature>
<feature type="helix" evidence="36">
    <location>
        <begin position="413"/>
        <end position="438"/>
    </location>
</feature>
<feature type="helix" evidence="36">
    <location>
        <begin position="444"/>
        <end position="473"/>
    </location>
</feature>
<feature type="helix" evidence="36">
    <location>
        <begin position="478"/>
        <end position="506"/>
    </location>
</feature>
<feature type="helix" evidence="36">
    <location>
        <begin position="509"/>
        <end position="531"/>
    </location>
</feature>
<feature type="helix" evidence="36">
    <location>
        <begin position="535"/>
        <end position="559"/>
    </location>
</feature>
<feature type="turn" evidence="36">
    <location>
        <begin position="560"/>
        <end position="562"/>
    </location>
</feature>
<feature type="helix" evidence="36">
    <location>
        <begin position="567"/>
        <end position="581"/>
    </location>
</feature>
<feature type="helix" evidence="36">
    <location>
        <begin position="583"/>
        <end position="598"/>
    </location>
</feature>
<feature type="strand" evidence="36">
    <location>
        <begin position="600"/>
        <end position="602"/>
    </location>
</feature>
<feature type="helix" evidence="36">
    <location>
        <begin position="608"/>
        <end position="630"/>
    </location>
</feature>
<feature type="helix" evidence="38">
    <location>
        <begin position="700"/>
        <end position="703"/>
    </location>
</feature>
<feature type="helix" evidence="39">
    <location>
        <begin position="711"/>
        <end position="730"/>
    </location>
</feature>
<feature type="helix" evidence="39">
    <location>
        <begin position="739"/>
        <end position="765"/>
    </location>
</feature>
<feature type="turn" evidence="38">
    <location>
        <begin position="770"/>
        <end position="772"/>
    </location>
</feature>
<feature type="helix" evidence="39">
    <location>
        <begin position="773"/>
        <end position="803"/>
    </location>
</feature>
<feature type="turn" evidence="38">
    <location>
        <begin position="806"/>
        <end position="808"/>
    </location>
</feature>
<feature type="helix" evidence="39">
    <location>
        <begin position="812"/>
        <end position="842"/>
    </location>
</feature>
<feature type="turn" evidence="39">
    <location>
        <begin position="843"/>
        <end position="845"/>
    </location>
</feature>
<feature type="helix" evidence="39">
    <location>
        <begin position="849"/>
        <end position="852"/>
    </location>
</feature>
<feature type="strand" evidence="39">
    <location>
        <begin position="856"/>
        <end position="859"/>
    </location>
</feature>
<proteinExistence type="evidence at protein level"/>
<keyword id="KW-0002">3D-structure</keyword>
<keyword id="KW-0007">Acetylation</keyword>
<keyword id="KW-0025">Alternative splicing</keyword>
<keyword id="KW-0130">Cell adhesion</keyword>
<keyword id="KW-0965">Cell junction</keyword>
<keyword id="KW-1003">Cell membrane</keyword>
<keyword id="KW-0963">Cytoplasm</keyword>
<keyword id="KW-0206">Cytoskeleton</keyword>
<keyword id="KW-0903">Direct protein sequencing</keyword>
<keyword id="KW-1017">Isopeptide bond</keyword>
<keyword id="KW-0472">Membrane</keyword>
<keyword id="KW-0539">Nucleus</keyword>
<keyword id="KW-0597">Phosphoprotein</keyword>
<keyword id="KW-1267">Proteomics identification</keyword>
<keyword id="KW-1185">Reference proteome</keyword>
<keyword id="KW-0832">Ubl conjugation</keyword>
<sequence>MTAVHAGNINFKWDPKSLEIRTLAVERLLEPLVTQVTTLVNTNSKGPSNKKRGRSKKAHVLAASVEQATENFLEKGDKIAKESQFLKEELVAAVEDVRKQGDLMKAAAGEFADDPCSSVKRGNMVRAARALLSAVTRLLILADMADVYKLLVQLKVVEDGILKLRNAGNEQDLGIQYKALKPEVDKLNIMAAKRQQELKDVGHRDQMAAARGILQKNVPILYTASQACLQHPDVAAYKANRDLIYKQLQQAVTGISNAAQATASDDASQHQGGGGGELAYALNNFDKQIIVDPLSFSEERFRPSLEERLESIISGAALMADSSCTRDDRRERIVAECNAVRQALQDLLSEYMGNAGRKERSDALNSAIDKMTKKTRDLRRQLRKAVMDHVSDSFLETNVPLLVLIEAAKNGNEKEVKEYAQVFREHANKLIEVANLACSISNNEEGVKLVRMSASQLEALCPQVINAALALAAKPQSKLAQENMDLFKEQWEKQVRVLTDAVDDITSIDDFLAVSENHILEDVNKCVIALQEKDVDGLDRTAGAIRGRAARVIHVVTSEMDNYEPGVYTEKVLEATKLLSNTVMPRFTEQVEAAVEALSSDPAQPMDENEFIDASRLVYDGIRDIRKAVLMIRTPEELDDSDFETEDFDVRSRTSVQTEDDQLIAGQSARAIMAQLPQEQKAKIAEQVASFQEEKSKLDAEVSKWDDSGNDIIVLAKQMCMIMMEMTDFTRGKGPLKNTSDVISAAKKIAEAGSRMDKLGRTIADHCPDSACKQDLLAYLQRIALYCHQLNICSKVKAEVQNLGGELVVSGVDSAMSLIQAAKNLMNAVVQTVKASYVASTKYQKSQGMASLNLPAVSWKMKAPEKKPLVKREKQDETQTKIKRASQKKHVNPVQALSEFKAMDSI</sequence>
<organism>
    <name type="scientific">Homo sapiens</name>
    <name type="common">Human</name>
    <dbReference type="NCBI Taxonomy" id="9606"/>
    <lineage>
        <taxon>Eukaryota</taxon>
        <taxon>Metazoa</taxon>
        <taxon>Chordata</taxon>
        <taxon>Craniata</taxon>
        <taxon>Vertebrata</taxon>
        <taxon>Euteleostomi</taxon>
        <taxon>Mammalia</taxon>
        <taxon>Eutheria</taxon>
        <taxon>Euarchontoglires</taxon>
        <taxon>Primates</taxon>
        <taxon>Haplorrhini</taxon>
        <taxon>Catarrhini</taxon>
        <taxon>Hominidae</taxon>
        <taxon>Homo</taxon>
    </lineage>
</organism>
<gene>
    <name evidence="22" type="primary">CTNNA1</name>
</gene>